<proteinExistence type="inferred from homology"/>
<sequence>MALVVQKYGGSSLESAERIRNVAERIVATKKAGNDVVVVCSAMGDTTDELLDLAAAVNPVPPAREMDMLLTAGERISNALVAMAIESLGAEAQSFTGSQAGVLTTERHGNARIVDVTPGRVREALDEGKICIVAGFQGVNKETRDVTTLGRGGSDTTAVALAAALGADVCEIYSDVDGVYTADPRIVPNAQKLERLSFEEMLELAAVGSKILVLRSVEYARAFNVPMRVRSSYSNDPGTLIAGSMEDIPMEEAVLTGVATDKSEAKVTVLGIPDKPGEAAKVFRALADAEINIDMVLQNVSSVEDGTTDITFTCPRSDGPRAMELLKKMQQQGDWTNVLYDDQVGKVSLVGAGMKSHPGVTAEFMEALRDVNVNVELISTSEIRISVLIREDDLDKSAKALHEKFQLGGDEEATVYAGTGR</sequence>
<feature type="chain" id="PRO_0000002375" description="Aspartokinase">
    <location>
        <begin position="1"/>
        <end position="421"/>
    </location>
</feature>
<feature type="domain" description="ACT 1" evidence="2">
    <location>
        <begin position="267"/>
        <end position="343"/>
    </location>
</feature>
<feature type="domain" description="ACT 2" evidence="2">
    <location>
        <begin position="349"/>
        <end position="421"/>
    </location>
</feature>
<feature type="binding site" evidence="1">
    <location>
        <begin position="7"/>
        <end position="10"/>
    </location>
    <ligand>
        <name>ATP</name>
        <dbReference type="ChEBI" id="CHEBI:30616"/>
    </ligand>
</feature>
<feature type="binding site" evidence="1">
    <location>
        <begin position="25"/>
        <end position="30"/>
    </location>
    <ligand>
        <name>substrate</name>
    </ligand>
</feature>
<feature type="binding site" evidence="1">
    <location>
        <position position="41"/>
    </location>
    <ligand>
        <name>ATP</name>
        <dbReference type="ChEBI" id="CHEBI:30616"/>
    </ligand>
</feature>
<feature type="binding site" evidence="1">
    <location>
        <begin position="45"/>
        <end position="49"/>
    </location>
    <ligand>
        <name>substrate</name>
    </ligand>
</feature>
<feature type="binding site" evidence="1">
    <location>
        <position position="74"/>
    </location>
    <ligand>
        <name>substrate</name>
    </ligand>
</feature>
<feature type="binding site" evidence="1">
    <location>
        <begin position="125"/>
        <end position="126"/>
    </location>
    <ligand>
        <name>substrate</name>
    </ligand>
</feature>
<feature type="binding site" evidence="1">
    <location>
        <begin position="151"/>
        <end position="154"/>
    </location>
    <ligand>
        <name>substrate</name>
    </ligand>
</feature>
<feature type="binding site" evidence="1">
    <location>
        <position position="154"/>
    </location>
    <ligand>
        <name>substrate</name>
    </ligand>
</feature>
<feature type="binding site" evidence="1">
    <location>
        <begin position="174"/>
        <end position="175"/>
    </location>
    <ligand>
        <name>ATP</name>
        <dbReference type="ChEBI" id="CHEBI:30616"/>
    </ligand>
</feature>
<feature type="binding site" evidence="1">
    <location>
        <begin position="180"/>
        <end position="185"/>
    </location>
    <ligand>
        <name>ATP</name>
        <dbReference type="ChEBI" id="CHEBI:30616"/>
    </ligand>
</feature>
<feature type="binding site" evidence="1">
    <location>
        <position position="210"/>
    </location>
    <ligand>
        <name>ATP</name>
        <dbReference type="ChEBI" id="CHEBI:30616"/>
    </ligand>
</feature>
<feature type="binding site" evidence="1">
    <location>
        <begin position="274"/>
        <end position="279"/>
    </location>
    <ligand>
        <name>substrate</name>
    </ligand>
</feature>
<feature type="binding site" evidence="1">
    <location>
        <position position="274"/>
    </location>
    <ligand>
        <name>substrate</name>
    </ligand>
</feature>
<feature type="binding site" evidence="1">
    <location>
        <begin position="292"/>
        <end position="294"/>
    </location>
    <ligand>
        <name>substrate</name>
    </ligand>
</feature>
<feature type="binding site" evidence="1">
    <location>
        <position position="298"/>
    </location>
    <ligand>
        <name>substrate</name>
    </ligand>
</feature>
<feature type="binding site" evidence="1">
    <location>
        <begin position="360"/>
        <end position="361"/>
    </location>
    <ligand>
        <name>substrate</name>
    </ligand>
</feature>
<feature type="binding site" evidence="1">
    <location>
        <begin position="374"/>
        <end position="375"/>
    </location>
    <ligand>
        <name>substrate</name>
    </ligand>
</feature>
<feature type="binding site" evidence="1">
    <location>
        <begin position="381"/>
        <end position="382"/>
    </location>
    <ligand>
        <name>substrate</name>
    </ligand>
</feature>
<feature type="site" description="Contribution to the catalysis" evidence="1">
    <location>
        <position position="7"/>
    </location>
</feature>
<feature type="site" description="Contribution to the catalysis" evidence="1">
    <location>
        <position position="74"/>
    </location>
</feature>
<feature type="splice variant" id="VSP_018656" description="In isoform Beta." evidence="3">
    <location>
        <begin position="1"/>
        <end position="249"/>
    </location>
</feature>
<organism>
    <name type="scientific">Corynebacterium efficiens (strain DSM 44549 / YS-314 / AJ 12310 / JCM 11189 / NBRC 100395)</name>
    <dbReference type="NCBI Taxonomy" id="196164"/>
    <lineage>
        <taxon>Bacteria</taxon>
        <taxon>Bacillati</taxon>
        <taxon>Actinomycetota</taxon>
        <taxon>Actinomycetes</taxon>
        <taxon>Mycobacteriales</taxon>
        <taxon>Corynebacteriaceae</taxon>
        <taxon>Corynebacterium</taxon>
    </lineage>
</organism>
<evidence type="ECO:0000250" key="1"/>
<evidence type="ECO:0000255" key="2">
    <source>
        <dbReference type="PROSITE-ProRule" id="PRU01007"/>
    </source>
</evidence>
<evidence type="ECO:0000305" key="3"/>
<name>AK_COREF</name>
<reference key="1">
    <citation type="submission" date="2002-04" db="EMBL/GenBank/DDBJ databases">
        <title>lysC of Corynebacterium efficiens.</title>
        <authorList>
            <person name="Itaya H."/>
            <person name="Kimura E."/>
            <person name="Kawahara Y."/>
            <person name="Sugimoto S."/>
        </authorList>
    </citation>
    <scope>NUCLEOTIDE SEQUENCE [GENOMIC DNA]</scope>
    <source>
        <strain>DSM 44549 / YS-314 / AJ 12310 / JCM 11189 / NBRC 100395</strain>
    </source>
</reference>
<reference key="2">
    <citation type="journal article" date="2003" name="Genome Res.">
        <title>Comparative complete genome sequence analysis of the amino acid replacements responsible for the thermostability of Corynebacterium efficiens.</title>
        <authorList>
            <person name="Nishio Y."/>
            <person name="Nakamura Y."/>
            <person name="Kawarabayasi Y."/>
            <person name="Usuda Y."/>
            <person name="Kimura E."/>
            <person name="Sugimoto S."/>
            <person name="Matsui K."/>
            <person name="Yamagishi A."/>
            <person name="Kikuchi H."/>
            <person name="Ikeo K."/>
            <person name="Gojobori T."/>
        </authorList>
    </citation>
    <scope>NUCLEOTIDE SEQUENCE [LARGE SCALE GENOMIC DNA]</scope>
    <source>
        <strain>DSM 44549 / YS-314 / AJ 12310 / JCM 11189 / NBRC 100395</strain>
    </source>
</reference>
<dbReference type="EC" id="2.7.2.4"/>
<dbReference type="EMBL" id="AB083129">
    <property type="protein sequence ID" value="BAB88820.1"/>
    <property type="molecule type" value="Genomic_DNA"/>
</dbReference>
<dbReference type="EMBL" id="BA000035">
    <property type="protein sequence ID" value="BAC17030.1"/>
    <property type="status" value="ALT_INIT"/>
    <property type="molecule type" value="Genomic_DNA"/>
</dbReference>
<dbReference type="RefSeq" id="WP_006768468.1">
    <molecule id="Q8RQN1-1"/>
    <property type="nucleotide sequence ID" value="NC_004369.1"/>
</dbReference>
<dbReference type="SMR" id="Q8RQN1"/>
<dbReference type="STRING" id="196164.gene:10740616"/>
<dbReference type="KEGG" id="cef:CE0220"/>
<dbReference type="eggNOG" id="COG0527">
    <property type="taxonomic scope" value="Bacteria"/>
</dbReference>
<dbReference type="HOGENOM" id="CLU_009116_3_2_11"/>
<dbReference type="OrthoDB" id="9799110at2"/>
<dbReference type="UniPathway" id="UPA00034">
    <property type="reaction ID" value="UER00015"/>
</dbReference>
<dbReference type="UniPathway" id="UPA00050">
    <property type="reaction ID" value="UER00461"/>
</dbReference>
<dbReference type="UniPathway" id="UPA00051">
    <property type="reaction ID" value="UER00462"/>
</dbReference>
<dbReference type="Proteomes" id="UP000001409">
    <property type="component" value="Chromosome"/>
</dbReference>
<dbReference type="GO" id="GO:0005829">
    <property type="term" value="C:cytosol"/>
    <property type="evidence" value="ECO:0007669"/>
    <property type="project" value="TreeGrafter"/>
</dbReference>
<dbReference type="GO" id="GO:0004072">
    <property type="term" value="F:aspartate kinase activity"/>
    <property type="evidence" value="ECO:0007669"/>
    <property type="project" value="UniProtKB-EC"/>
</dbReference>
<dbReference type="GO" id="GO:0005524">
    <property type="term" value="F:ATP binding"/>
    <property type="evidence" value="ECO:0007669"/>
    <property type="project" value="UniProtKB-KW"/>
</dbReference>
<dbReference type="GO" id="GO:0019877">
    <property type="term" value="P:diaminopimelate biosynthetic process"/>
    <property type="evidence" value="ECO:0007669"/>
    <property type="project" value="UniProtKB-KW"/>
</dbReference>
<dbReference type="GO" id="GO:0009090">
    <property type="term" value="P:homoserine biosynthetic process"/>
    <property type="evidence" value="ECO:0007669"/>
    <property type="project" value="TreeGrafter"/>
</dbReference>
<dbReference type="GO" id="GO:0009089">
    <property type="term" value="P:lysine biosynthetic process via diaminopimelate"/>
    <property type="evidence" value="ECO:0007669"/>
    <property type="project" value="UniProtKB-UniPathway"/>
</dbReference>
<dbReference type="GO" id="GO:0009088">
    <property type="term" value="P:threonine biosynthetic process"/>
    <property type="evidence" value="ECO:0007669"/>
    <property type="project" value="UniProtKB-UniPathway"/>
</dbReference>
<dbReference type="CDD" id="cd04261">
    <property type="entry name" value="AAK_AKii-LysC-BS"/>
    <property type="match status" value="1"/>
</dbReference>
<dbReference type="CDD" id="cd04913">
    <property type="entry name" value="ACT_AKii-LysC-BS-like_1"/>
    <property type="match status" value="1"/>
</dbReference>
<dbReference type="CDD" id="cd04936">
    <property type="entry name" value="ACT_AKii-LysC-BS-like_2"/>
    <property type="match status" value="1"/>
</dbReference>
<dbReference type="FunFam" id="3.30.2130.10:FF:000002">
    <property type="entry name" value="Aspartokinase"/>
    <property type="match status" value="1"/>
</dbReference>
<dbReference type="FunFam" id="3.40.1160.10:FF:000002">
    <property type="entry name" value="Aspartokinase"/>
    <property type="match status" value="1"/>
</dbReference>
<dbReference type="Gene3D" id="3.30.70.260">
    <property type="match status" value="2"/>
</dbReference>
<dbReference type="Gene3D" id="3.40.1160.10">
    <property type="entry name" value="Acetylglutamate kinase-like"/>
    <property type="match status" value="1"/>
</dbReference>
<dbReference type="InterPro" id="IPR036393">
    <property type="entry name" value="AceGlu_kinase-like_sf"/>
</dbReference>
<dbReference type="InterPro" id="IPR045865">
    <property type="entry name" value="ACT-like_dom_sf"/>
</dbReference>
<dbReference type="InterPro" id="IPR054352">
    <property type="entry name" value="ACT_Aspartokinase"/>
</dbReference>
<dbReference type="InterPro" id="IPR002912">
    <property type="entry name" value="ACT_dom"/>
</dbReference>
<dbReference type="InterPro" id="IPR041740">
    <property type="entry name" value="AKii-LysC-BS"/>
</dbReference>
<dbReference type="InterPro" id="IPR001048">
    <property type="entry name" value="Asp/Glu/Uridylate_kinase"/>
</dbReference>
<dbReference type="InterPro" id="IPR005260">
    <property type="entry name" value="Asp_kin_monofn"/>
</dbReference>
<dbReference type="InterPro" id="IPR001341">
    <property type="entry name" value="Asp_kinase"/>
</dbReference>
<dbReference type="InterPro" id="IPR018042">
    <property type="entry name" value="Aspartate_kinase_CS"/>
</dbReference>
<dbReference type="NCBIfam" id="TIGR00656">
    <property type="entry name" value="asp_kin_monofn"/>
    <property type="match status" value="1"/>
</dbReference>
<dbReference type="NCBIfam" id="TIGR00657">
    <property type="entry name" value="asp_kinases"/>
    <property type="match status" value="1"/>
</dbReference>
<dbReference type="NCBIfam" id="NF005153">
    <property type="entry name" value="PRK06635.1-1"/>
    <property type="match status" value="1"/>
</dbReference>
<dbReference type="NCBIfam" id="NF005154">
    <property type="entry name" value="PRK06635.1-2"/>
    <property type="match status" value="1"/>
</dbReference>
<dbReference type="NCBIfam" id="NF005155">
    <property type="entry name" value="PRK06635.1-4"/>
    <property type="match status" value="1"/>
</dbReference>
<dbReference type="PANTHER" id="PTHR21499">
    <property type="entry name" value="ASPARTATE KINASE"/>
    <property type="match status" value="1"/>
</dbReference>
<dbReference type="PANTHER" id="PTHR21499:SF3">
    <property type="entry name" value="ASPARTOKINASE"/>
    <property type="match status" value="1"/>
</dbReference>
<dbReference type="Pfam" id="PF00696">
    <property type="entry name" value="AA_kinase"/>
    <property type="match status" value="1"/>
</dbReference>
<dbReference type="Pfam" id="PF22468">
    <property type="entry name" value="ACT_9"/>
    <property type="match status" value="2"/>
</dbReference>
<dbReference type="PIRSF" id="PIRSF000726">
    <property type="entry name" value="Asp_kin"/>
    <property type="match status" value="1"/>
</dbReference>
<dbReference type="SUPFAM" id="SSF55021">
    <property type="entry name" value="ACT-like"/>
    <property type="match status" value="2"/>
</dbReference>
<dbReference type="SUPFAM" id="SSF53633">
    <property type="entry name" value="Carbamate kinase-like"/>
    <property type="match status" value="1"/>
</dbReference>
<dbReference type="PROSITE" id="PS51671">
    <property type="entry name" value="ACT"/>
    <property type="match status" value="2"/>
</dbReference>
<dbReference type="PROSITE" id="PS00324">
    <property type="entry name" value="ASPARTOKINASE"/>
    <property type="match status" value="1"/>
</dbReference>
<comment type="function">
    <text evidence="1">Catalyzes the phosphorylation of the beta-carboxyl group of aspartic acid with ATP to yield 4-phospho-L-aspartate, which is involved in the branched biosynthetic pathway leading to the biosynthesis of amino acids lysine, threonine, isoleucine and methionine.</text>
</comment>
<comment type="catalytic activity">
    <reaction>
        <text>L-aspartate + ATP = 4-phospho-L-aspartate + ADP</text>
        <dbReference type="Rhea" id="RHEA:23776"/>
        <dbReference type="ChEBI" id="CHEBI:29991"/>
        <dbReference type="ChEBI" id="CHEBI:30616"/>
        <dbReference type="ChEBI" id="CHEBI:57535"/>
        <dbReference type="ChEBI" id="CHEBI:456216"/>
        <dbReference type="EC" id="2.7.2.4"/>
    </reaction>
</comment>
<comment type="pathway">
    <text>Amino-acid biosynthesis; L-lysine biosynthesis via DAP pathway; (S)-tetrahydrodipicolinate from L-aspartate: step 1/4.</text>
</comment>
<comment type="pathway">
    <text>Amino-acid biosynthesis; L-methionine biosynthesis via de novo pathway; L-homoserine from L-aspartate: step 1/3.</text>
</comment>
<comment type="pathway">
    <text>Amino-acid biosynthesis; L-threonine biosynthesis; L-threonine from L-aspartate: step 1/5.</text>
</comment>
<comment type="subunit">
    <text evidence="1">Tetramer consisting of 2 isoforms Alpha (catalytic and regulation) and of a homodimer of 2 isoforms Beta (regulation).</text>
</comment>
<comment type="alternative products">
    <event type="alternative initiation"/>
    <isoform>
        <id>Q8RQN1-1</id>
        <name>Alpha</name>
        <name>Aspartokinase subunit alpha</name>
        <sequence type="displayed"/>
    </isoform>
    <isoform>
        <id>Q8RQN1-2</id>
        <name>Beta</name>
        <name>Aspartokinase subunit beta</name>
        <sequence type="described" ref="VSP_018656"/>
    </isoform>
</comment>
<comment type="similarity">
    <text evidence="3">Belongs to the aspartokinase family.</text>
</comment>
<comment type="sequence caution" evidence="3">
    <conflict type="erroneous initiation">
        <sequence resource="EMBL-CDS" id="BAC17030"/>
    </conflict>
    <text>Extended N-terminus.</text>
</comment>
<gene>
    <name type="primary">lysC</name>
    <name type="synonym">ask</name>
    <name type="ordered locus">CE0220</name>
</gene>
<protein>
    <recommendedName>
        <fullName>Aspartokinase</fullName>
        <ecNumber>2.7.2.4</ecNumber>
    </recommendedName>
    <alternativeName>
        <fullName>Aspartate kinase</fullName>
    </alternativeName>
</protein>
<accession>Q8RQN1</accession>
<keyword id="KW-0024">Alternative initiation</keyword>
<keyword id="KW-0028">Amino-acid biosynthesis</keyword>
<keyword id="KW-0067">ATP-binding</keyword>
<keyword id="KW-0220">Diaminopimelate biosynthesis</keyword>
<keyword id="KW-0418">Kinase</keyword>
<keyword id="KW-0457">Lysine biosynthesis</keyword>
<keyword id="KW-0547">Nucleotide-binding</keyword>
<keyword id="KW-1185">Reference proteome</keyword>
<keyword id="KW-0677">Repeat</keyword>
<keyword id="KW-0808">Transferase</keyword>